<keyword id="KW-0364">Heterocyst</keyword>
<keyword id="KW-1185">Reference proteome</keyword>
<dbReference type="EMBL" id="BA000019">
    <property type="protein sequence ID" value="BAB74933.1"/>
    <property type="molecule type" value="Genomic_DNA"/>
</dbReference>
<dbReference type="PIR" id="AC2210">
    <property type="entry name" value="AC2210"/>
</dbReference>
<dbReference type="SMR" id="Q8YS57"/>
<dbReference type="STRING" id="103690.gene:10495272"/>
<dbReference type="KEGG" id="ana:alr3234"/>
<dbReference type="eggNOG" id="ENOG5031TX7">
    <property type="taxonomic scope" value="Bacteria"/>
</dbReference>
<dbReference type="Proteomes" id="UP000002483">
    <property type="component" value="Chromosome"/>
</dbReference>
<dbReference type="GO" id="GO:0043158">
    <property type="term" value="P:heterocyst development"/>
    <property type="evidence" value="ECO:0007669"/>
    <property type="project" value="UniProtKB-KW"/>
</dbReference>
<dbReference type="InterPro" id="IPR049598">
    <property type="entry name" value="HetP-like"/>
</dbReference>
<dbReference type="NCBIfam" id="NF037966">
    <property type="entry name" value="HetP_family"/>
    <property type="match status" value="1"/>
</dbReference>
<reference evidence="5" key="1">
    <citation type="journal article" date="2001" name="DNA Res.">
        <title>Complete genomic sequence of the filamentous nitrogen-fixing cyanobacterium Anabaena sp. strain PCC 7120.</title>
        <authorList>
            <person name="Kaneko T."/>
            <person name="Nakamura Y."/>
            <person name="Wolk C.P."/>
            <person name="Kuritz T."/>
            <person name="Sasamoto S."/>
            <person name="Watanabe A."/>
            <person name="Iriguchi M."/>
            <person name="Ishikawa A."/>
            <person name="Kawashima K."/>
            <person name="Kimura T."/>
            <person name="Kishida Y."/>
            <person name="Kohara M."/>
            <person name="Matsumoto M."/>
            <person name="Matsuno A."/>
            <person name="Muraki A."/>
            <person name="Nakazaki N."/>
            <person name="Shimpo S."/>
            <person name="Sugimoto M."/>
            <person name="Takazawa M."/>
            <person name="Yamada M."/>
            <person name="Yasuda M."/>
            <person name="Tabata S."/>
        </authorList>
    </citation>
    <scope>NUCLEOTIDE SEQUENCE [LARGE SCALE GENOMIC DNA]</scope>
    <source>
        <strain>PCC 7120 / SAG 25.82 / UTEX 2576</strain>
    </source>
</reference>
<reference key="2">
    <citation type="journal article" date="2010" name="Mol. Microbiol.">
        <title>Ectopic expression of hetP can partially bypass the need for hetR in heterocyst differentiation by Anabaena sp. strain PCC 7120.</title>
        <authorList>
            <person name="Higa K.C."/>
            <person name="Callahan S.M."/>
        </authorList>
    </citation>
    <scope>FUNCTION</scope>
    <source>
        <strain>PCC 7120 / SAG 25.82 / UTEX 2576</strain>
    </source>
</reference>
<reference key="3">
    <citation type="journal article" date="2016" name="Proc. Natl. Acad. Sci. U.S.A.">
        <title>The heterocyst regulatory protein HetP and its homologs modulate heterocyst commitment in Anabaena sp. strain PCC 7120.</title>
        <authorList>
            <person name="Videau P."/>
            <person name="Rivers O.S."/>
            <person name="Hurd K."/>
            <person name="Ushijima B."/>
            <person name="Oshiro R.T."/>
            <person name="Ende R.J."/>
            <person name="O'Hanlon S.M."/>
            <person name="Cozy L.M."/>
        </authorList>
    </citation>
    <scope>FUNCTION</scope>
    <scope>INDUCTION</scope>
    <scope>DOMAIN</scope>
    <scope>DISRUPTION PHENOTYPE</scope>
    <source>
        <strain>PCC 7120 / SAG 25.82 / UTEX 2576</strain>
    </source>
</reference>
<organism>
    <name type="scientific">Nostoc sp. (strain PCC 7120 / SAG 25.82 / UTEX 2576)</name>
    <dbReference type="NCBI Taxonomy" id="103690"/>
    <lineage>
        <taxon>Bacteria</taxon>
        <taxon>Bacillati</taxon>
        <taxon>Cyanobacteriota</taxon>
        <taxon>Cyanophyceae</taxon>
        <taxon>Nostocales</taxon>
        <taxon>Nostocaceae</taxon>
        <taxon>Nostoc</taxon>
    </lineage>
</organism>
<evidence type="ECO:0000269" key="1">
    <source>
    </source>
</evidence>
<evidence type="ECO:0000269" key="2">
    <source>
    </source>
</evidence>
<evidence type="ECO:0000303" key="3">
    <source>
    </source>
</evidence>
<evidence type="ECO:0000305" key="4"/>
<evidence type="ECO:0000312" key="5">
    <source>
        <dbReference type="EMBL" id="BAB74933.1"/>
    </source>
</evidence>
<sequence length="122" mass="14105">MLAGCFNLSGYSYKCNSLLHHQLPITNYQFSNHQIKSSGEVMYQEDIYNSQNVKKINNEQVDQIIKSIIAGKYSWACVLLLRYSGYNPIDYIPYRTYIRLLKNNCLGGKNQEGRNDSQEVLI</sequence>
<comment type="function">
    <text evidence="1 2">Delays heterocyst differentiation and commitment when nitrogen is limiting (PubMed:27791130). Interplay between the 4 HetP paralogs controls the timing of commitment to heterocyst formation and its duration (PubMed:27791130). Epistatic analysis show that the 3 paralogs act upstream of hetP to delay commitment (asl1930, alr3234) or inhibit development (alr2902) (PubMed:27791130). Asl1930 and Alr3234 must also attenuate the activity of Alr2902 (PubMed:27791130). Ectopic expression does not complement a hetP deletion (PubMed:20545862).</text>
</comment>
<comment type="subunit">
    <text evidence="2">In bacterial two-hybrid assays interacts robustly with itself, Asl1930, Alr2902 and HetR and weakly with HetP (PubMed:27791130).</text>
</comment>
<comment type="induction">
    <text evidence="2">Transcription fluctates after nitrogen stepdown; down-regulated at 6 hours, rises by 12 hours, decreases at 18 hours and rises again by 24 hours (PubMed:27791130).</text>
</comment>
<comment type="domain">
    <text evidence="2">An internal segment (residues 19-108) complements a hetP deletion for heterocyst formation but only partially restores nitrogenase activity; it does not bypass the requirement for heterocyst differentiation master regulator hetR (PubMed:27791130).</text>
</comment>
<comment type="disruption phenotype">
    <text evidence="2">Single deletion, no change in heterocyst differentiation, in a double hetP-alr3234 deletion no heterocysts appear before 48 hours, by 120 hours only 3% heterocysts form. A triple asl1930-alr2902-alr3234 deletion makes 50% more heterocysts than wild-type (although they are not active for N(2) fixation), while a quadruple hetP-asl1930-alr2902-alr3234 deletion has delayed development but makes wild-type levels of N(2)-fixing heterocysts by 72 hours.</text>
</comment>
<comment type="miscellaneous">
    <text evidence="1 2">In Nostoc filaments, approximately every 10th vegetative cell terminally differentiates into a heterocyst specialized for nitrogen fixation under nitrogen deficiency (PubMed:20545862, PubMed:27791130).</text>
</comment>
<comment type="similarity">
    <text evidence="4">Belongs to the HetP family.</text>
</comment>
<accession>Q8YS57</accession>
<name>H3234_NOSS1</name>
<gene>
    <name type="ordered locus">alr3234</name>
</gene>
<proteinExistence type="evidence at transcript level"/>
<feature type="chain" id="PRO_0000459615" description="HetP-like commitment protein Alr3234">
    <location>
        <begin position="1"/>
        <end position="122"/>
    </location>
</feature>
<protein>
    <recommendedName>
        <fullName evidence="3">HetP-like commitment protein Alr3234</fullName>
    </recommendedName>
</protein>